<protein>
    <recommendedName>
        <fullName>High osmolarity signaling protein SHO1</fullName>
    </recommendedName>
    <alternativeName>
        <fullName>Osmosensor SHO1</fullName>
    </alternativeName>
</protein>
<evidence type="ECO:0000250" key="1"/>
<evidence type="ECO:0000255" key="2"/>
<evidence type="ECO:0000255" key="3">
    <source>
        <dbReference type="PROSITE-ProRule" id="PRU00192"/>
    </source>
</evidence>
<evidence type="ECO:0000256" key="4">
    <source>
        <dbReference type="SAM" id="MobiDB-lite"/>
    </source>
</evidence>
<evidence type="ECO:0000305" key="5"/>
<proteinExistence type="inferred from homology"/>
<feature type="chain" id="PRO_0000410400" description="High osmolarity signaling protein SHO1">
    <location>
        <begin position="1"/>
        <end position="343"/>
    </location>
</feature>
<feature type="topological domain" description="Cytoplasmic" evidence="2">
    <location>
        <begin position="1"/>
        <end position="20"/>
    </location>
</feature>
<feature type="transmembrane region" description="Helical" evidence="2">
    <location>
        <begin position="21"/>
        <end position="41"/>
    </location>
</feature>
<feature type="topological domain" description="Extracellular" evidence="2">
    <location>
        <begin position="42"/>
        <end position="52"/>
    </location>
</feature>
<feature type="transmembrane region" description="Helical" evidence="2">
    <location>
        <begin position="53"/>
        <end position="73"/>
    </location>
</feature>
<feature type="topological domain" description="Cytoplasmic" evidence="2">
    <location>
        <begin position="74"/>
        <end position="83"/>
    </location>
</feature>
<feature type="transmembrane region" description="Helical" evidence="2">
    <location>
        <begin position="84"/>
        <end position="104"/>
    </location>
</feature>
<feature type="topological domain" description="Extracellular" evidence="2">
    <location>
        <begin position="105"/>
        <end position="111"/>
    </location>
</feature>
<feature type="transmembrane region" description="Helical" evidence="2">
    <location>
        <begin position="112"/>
        <end position="132"/>
    </location>
</feature>
<feature type="topological domain" description="Cytoplasmic" evidence="2">
    <location>
        <begin position="133"/>
        <end position="343"/>
    </location>
</feature>
<feature type="domain" description="SH3" evidence="3">
    <location>
        <begin position="284"/>
        <end position="343"/>
    </location>
</feature>
<feature type="region of interest" description="Disordered" evidence="4">
    <location>
        <begin position="231"/>
        <end position="281"/>
    </location>
</feature>
<feature type="compositionally biased region" description="Low complexity" evidence="4">
    <location>
        <begin position="235"/>
        <end position="245"/>
    </location>
</feature>
<feature type="glycosylation site" description="N-linked (GlcNAc...) asparagine" evidence="2">
    <location>
        <position position="107"/>
    </location>
</feature>
<sequence>MPGKRGGGGGIDIGLIFAHKILTVLLLLSTVGWIVAFIGQCAAEAGSGGRQGVLWFAIFLQLFLIVAKYLLVMTDSLGTHRLQLTTFTSIALVFSVIGINSGIYSSNSSEEAVAAGWFLITLTNIVWLLFLTTEEESALYPIVNIANDGVTPPAARTSGRYNGGGGAGGQSMRMAGGGAGTGLGGAGYAAGNGSAYSGGFQGGAAGGYQPAFGNSPSAADITTANGTGLGAPKMSSAASVRSRAANDTATGGVGGISQDAPSVASHGAPASPAQPGAKGSELPDYGYKARALYAYQANADDPTEISFSKGEVLDIVDNSGKWWQARKSNGETGIVPSNYMQLL</sequence>
<keyword id="KW-1003">Cell membrane</keyword>
<keyword id="KW-0325">Glycoprotein</keyword>
<keyword id="KW-0472">Membrane</keyword>
<keyword id="KW-0728">SH3 domain</keyword>
<keyword id="KW-0346">Stress response</keyword>
<keyword id="KW-0812">Transmembrane</keyword>
<keyword id="KW-1133">Transmembrane helix</keyword>
<gene>
    <name type="primary">SHO1</name>
    <name type="ORF">sr14199</name>
</gene>
<reference key="1">
    <citation type="journal article" date="2010" name="Science">
        <title>Pathogenicity determinants in smut fungi revealed by genome comparison.</title>
        <authorList>
            <person name="Schirawski J."/>
            <person name="Mannhaupt G."/>
            <person name="Muench K."/>
            <person name="Brefort T."/>
            <person name="Schipper K."/>
            <person name="Doehlemann G."/>
            <person name="Di Stasio M."/>
            <person name="Roessel N."/>
            <person name="Mendoza-Mendoza A."/>
            <person name="Pester D."/>
            <person name="Mueller O."/>
            <person name="Winterberg B."/>
            <person name="Meyer E."/>
            <person name="Ghareeb H."/>
            <person name="Wollenberg T."/>
            <person name="Muensterkoetter M."/>
            <person name="Wong P."/>
            <person name="Walter M."/>
            <person name="Stukenbrock E."/>
            <person name="Gueldener U."/>
            <person name="Kahmann R."/>
        </authorList>
    </citation>
    <scope>NUCLEOTIDE SEQUENCE [LARGE SCALE GENOMIC DNA]</scope>
    <source>
        <strain>SRZ2</strain>
    </source>
</reference>
<organism>
    <name type="scientific">Sporisorium reilianum (strain SRZ2)</name>
    <name type="common">Maize head smut fungus</name>
    <dbReference type="NCBI Taxonomy" id="999809"/>
    <lineage>
        <taxon>Eukaryota</taxon>
        <taxon>Fungi</taxon>
        <taxon>Dikarya</taxon>
        <taxon>Basidiomycota</taxon>
        <taxon>Ustilaginomycotina</taxon>
        <taxon>Ustilaginomycetes</taxon>
        <taxon>Ustilaginales</taxon>
        <taxon>Ustilaginaceae</taxon>
        <taxon>Sporisorium</taxon>
    </lineage>
</organism>
<accession>E7A253</accession>
<comment type="function">
    <text evidence="1">Plasma membrane osmosensor that activates the high osmolarity glycerol (HOG) MAPK signaling pathway in response to high osmolarity.</text>
</comment>
<comment type="subunit">
    <text evidence="1">Forms homooligomers.</text>
</comment>
<comment type="subcellular location">
    <subcellularLocation>
        <location evidence="1">Cell membrane</location>
        <topology evidence="1">Multi-pass membrane protein</topology>
    </subcellularLocation>
</comment>
<comment type="similarity">
    <text evidence="5">Belongs to the SHO1 family.</text>
</comment>
<dbReference type="EMBL" id="FQ311473">
    <property type="protein sequence ID" value="CBQ73560.1"/>
    <property type="molecule type" value="Genomic_DNA"/>
</dbReference>
<dbReference type="SMR" id="E7A253"/>
<dbReference type="GlyCosmos" id="E7A253">
    <property type="glycosylation" value="1 site, No reported glycans"/>
</dbReference>
<dbReference type="EnsemblFungi" id="CBQ73560">
    <property type="protein sequence ID" value="CBQ73560"/>
    <property type="gene ID" value="sr14199"/>
</dbReference>
<dbReference type="VEuPathDB" id="FungiDB:sr14199"/>
<dbReference type="eggNOG" id="ENOG502QW7A">
    <property type="taxonomic scope" value="Eukaryota"/>
</dbReference>
<dbReference type="HOGENOM" id="CLU_043316_0_0_1"/>
<dbReference type="OrthoDB" id="25408at2759"/>
<dbReference type="Proteomes" id="UP000008867">
    <property type="component" value="Chromosome 8"/>
</dbReference>
<dbReference type="GO" id="GO:0005634">
    <property type="term" value="C:nucleus"/>
    <property type="evidence" value="ECO:0007669"/>
    <property type="project" value="TreeGrafter"/>
</dbReference>
<dbReference type="GO" id="GO:0005886">
    <property type="term" value="C:plasma membrane"/>
    <property type="evidence" value="ECO:0007669"/>
    <property type="project" value="UniProtKB-SubCell"/>
</dbReference>
<dbReference type="GO" id="GO:0000147">
    <property type="term" value="P:actin cortical patch assembly"/>
    <property type="evidence" value="ECO:0007669"/>
    <property type="project" value="TreeGrafter"/>
</dbReference>
<dbReference type="GO" id="GO:0030833">
    <property type="term" value="P:regulation of actin filament polymerization"/>
    <property type="evidence" value="ECO:0007669"/>
    <property type="project" value="TreeGrafter"/>
</dbReference>
<dbReference type="CDD" id="cd11855">
    <property type="entry name" value="SH3_Sho1p"/>
    <property type="match status" value="1"/>
</dbReference>
<dbReference type="FunFam" id="2.30.30.40:FF:000213">
    <property type="entry name" value="High osmolarity signaling protein SHO1"/>
    <property type="match status" value="1"/>
</dbReference>
<dbReference type="Gene3D" id="2.30.30.40">
    <property type="entry name" value="SH3 Domains"/>
    <property type="match status" value="1"/>
</dbReference>
<dbReference type="InterPro" id="IPR036028">
    <property type="entry name" value="SH3-like_dom_sf"/>
</dbReference>
<dbReference type="InterPro" id="IPR001452">
    <property type="entry name" value="SH3_domain"/>
</dbReference>
<dbReference type="InterPro" id="IPR035522">
    <property type="entry name" value="Sho1_SH3"/>
</dbReference>
<dbReference type="PANTHER" id="PTHR15735:SF19">
    <property type="entry name" value="ACTIN CYTOSKELETON-REGULATORY COMPLEX PROTEIN SLA1"/>
    <property type="match status" value="1"/>
</dbReference>
<dbReference type="PANTHER" id="PTHR15735">
    <property type="entry name" value="FCH AND DOUBLE SH3 DOMAINS PROTEIN"/>
    <property type="match status" value="1"/>
</dbReference>
<dbReference type="Pfam" id="PF00018">
    <property type="entry name" value="SH3_1"/>
    <property type="match status" value="1"/>
</dbReference>
<dbReference type="PRINTS" id="PR00452">
    <property type="entry name" value="SH3DOMAIN"/>
</dbReference>
<dbReference type="SMART" id="SM00326">
    <property type="entry name" value="SH3"/>
    <property type="match status" value="1"/>
</dbReference>
<dbReference type="SUPFAM" id="SSF50044">
    <property type="entry name" value="SH3-domain"/>
    <property type="match status" value="1"/>
</dbReference>
<dbReference type="PROSITE" id="PS50002">
    <property type="entry name" value="SH3"/>
    <property type="match status" value="1"/>
</dbReference>
<name>SHO1_SPORE</name>